<gene>
    <name evidence="1" type="primary">recA</name>
    <name type="ordered locus">Chy400_1482</name>
</gene>
<dbReference type="EMBL" id="CP001364">
    <property type="protein sequence ID" value="ACM52900.1"/>
    <property type="molecule type" value="Genomic_DNA"/>
</dbReference>
<dbReference type="SMR" id="B9LCN0"/>
<dbReference type="KEGG" id="chl:Chy400_1482"/>
<dbReference type="HOGENOM" id="CLU_040469_3_2_0"/>
<dbReference type="OrthoDB" id="9776733at2"/>
<dbReference type="GO" id="GO:0005829">
    <property type="term" value="C:cytosol"/>
    <property type="evidence" value="ECO:0007669"/>
    <property type="project" value="TreeGrafter"/>
</dbReference>
<dbReference type="GO" id="GO:0005524">
    <property type="term" value="F:ATP binding"/>
    <property type="evidence" value="ECO:0007669"/>
    <property type="project" value="UniProtKB-UniRule"/>
</dbReference>
<dbReference type="GO" id="GO:0016887">
    <property type="term" value="F:ATP hydrolysis activity"/>
    <property type="evidence" value="ECO:0007669"/>
    <property type="project" value="InterPro"/>
</dbReference>
<dbReference type="GO" id="GO:0140664">
    <property type="term" value="F:ATP-dependent DNA damage sensor activity"/>
    <property type="evidence" value="ECO:0007669"/>
    <property type="project" value="InterPro"/>
</dbReference>
<dbReference type="GO" id="GO:0003684">
    <property type="term" value="F:damaged DNA binding"/>
    <property type="evidence" value="ECO:0007669"/>
    <property type="project" value="UniProtKB-UniRule"/>
</dbReference>
<dbReference type="GO" id="GO:0003697">
    <property type="term" value="F:single-stranded DNA binding"/>
    <property type="evidence" value="ECO:0007669"/>
    <property type="project" value="UniProtKB-UniRule"/>
</dbReference>
<dbReference type="GO" id="GO:0006310">
    <property type="term" value="P:DNA recombination"/>
    <property type="evidence" value="ECO:0007669"/>
    <property type="project" value="UniProtKB-UniRule"/>
</dbReference>
<dbReference type="GO" id="GO:0006281">
    <property type="term" value="P:DNA repair"/>
    <property type="evidence" value="ECO:0007669"/>
    <property type="project" value="UniProtKB-UniRule"/>
</dbReference>
<dbReference type="GO" id="GO:0009432">
    <property type="term" value="P:SOS response"/>
    <property type="evidence" value="ECO:0007669"/>
    <property type="project" value="UniProtKB-UniRule"/>
</dbReference>
<dbReference type="CDD" id="cd00983">
    <property type="entry name" value="RecA"/>
    <property type="match status" value="1"/>
</dbReference>
<dbReference type="FunFam" id="3.40.50.300:FF:000087">
    <property type="entry name" value="Recombinase RecA"/>
    <property type="match status" value="1"/>
</dbReference>
<dbReference type="Gene3D" id="3.40.50.300">
    <property type="entry name" value="P-loop containing nucleotide triphosphate hydrolases"/>
    <property type="match status" value="1"/>
</dbReference>
<dbReference type="HAMAP" id="MF_00268">
    <property type="entry name" value="RecA"/>
    <property type="match status" value="1"/>
</dbReference>
<dbReference type="InterPro" id="IPR003593">
    <property type="entry name" value="AAA+_ATPase"/>
</dbReference>
<dbReference type="InterPro" id="IPR013765">
    <property type="entry name" value="DNA_recomb/repair_RecA"/>
</dbReference>
<dbReference type="InterPro" id="IPR020584">
    <property type="entry name" value="DNA_recomb/repair_RecA_CS"/>
</dbReference>
<dbReference type="InterPro" id="IPR027417">
    <property type="entry name" value="P-loop_NTPase"/>
</dbReference>
<dbReference type="InterPro" id="IPR049261">
    <property type="entry name" value="RecA-like_C"/>
</dbReference>
<dbReference type="InterPro" id="IPR049428">
    <property type="entry name" value="RecA-like_N"/>
</dbReference>
<dbReference type="InterPro" id="IPR020588">
    <property type="entry name" value="RecA_ATP-bd"/>
</dbReference>
<dbReference type="InterPro" id="IPR023400">
    <property type="entry name" value="RecA_C_sf"/>
</dbReference>
<dbReference type="InterPro" id="IPR020587">
    <property type="entry name" value="RecA_monomer-monomer_interface"/>
</dbReference>
<dbReference type="NCBIfam" id="TIGR02012">
    <property type="entry name" value="tigrfam_recA"/>
    <property type="match status" value="1"/>
</dbReference>
<dbReference type="PANTHER" id="PTHR45900:SF1">
    <property type="entry name" value="MITOCHONDRIAL DNA REPAIR PROTEIN RECA HOMOLOG-RELATED"/>
    <property type="match status" value="1"/>
</dbReference>
<dbReference type="PANTHER" id="PTHR45900">
    <property type="entry name" value="RECA"/>
    <property type="match status" value="1"/>
</dbReference>
<dbReference type="Pfam" id="PF00154">
    <property type="entry name" value="RecA"/>
    <property type="match status" value="1"/>
</dbReference>
<dbReference type="Pfam" id="PF21096">
    <property type="entry name" value="RecA_C"/>
    <property type="match status" value="1"/>
</dbReference>
<dbReference type="PRINTS" id="PR00142">
    <property type="entry name" value="RECA"/>
</dbReference>
<dbReference type="SMART" id="SM00382">
    <property type="entry name" value="AAA"/>
    <property type="match status" value="1"/>
</dbReference>
<dbReference type="SUPFAM" id="SSF52540">
    <property type="entry name" value="P-loop containing nucleoside triphosphate hydrolases"/>
    <property type="match status" value="1"/>
</dbReference>
<dbReference type="SUPFAM" id="SSF54752">
    <property type="entry name" value="RecA protein, C-terminal domain"/>
    <property type="match status" value="1"/>
</dbReference>
<dbReference type="PROSITE" id="PS00321">
    <property type="entry name" value="RECA_1"/>
    <property type="match status" value="1"/>
</dbReference>
<dbReference type="PROSITE" id="PS50162">
    <property type="entry name" value="RECA_2"/>
    <property type="match status" value="1"/>
</dbReference>
<dbReference type="PROSITE" id="PS50163">
    <property type="entry name" value="RECA_3"/>
    <property type="match status" value="1"/>
</dbReference>
<feature type="chain" id="PRO_1000193299" description="Protein RecA">
    <location>
        <begin position="1"/>
        <end position="351"/>
    </location>
</feature>
<feature type="binding site" evidence="1">
    <location>
        <begin position="68"/>
        <end position="75"/>
    </location>
    <ligand>
        <name>ATP</name>
        <dbReference type="ChEBI" id="CHEBI:30616"/>
    </ligand>
</feature>
<protein>
    <recommendedName>
        <fullName evidence="1">Protein RecA</fullName>
    </recommendedName>
    <alternativeName>
        <fullName evidence="1">Recombinase A</fullName>
    </alternativeName>
</protein>
<evidence type="ECO:0000255" key="1">
    <source>
        <dbReference type="HAMAP-Rule" id="MF_00268"/>
    </source>
</evidence>
<keyword id="KW-0067">ATP-binding</keyword>
<keyword id="KW-0963">Cytoplasm</keyword>
<keyword id="KW-0227">DNA damage</keyword>
<keyword id="KW-0233">DNA recombination</keyword>
<keyword id="KW-0234">DNA repair</keyword>
<keyword id="KW-0238">DNA-binding</keyword>
<keyword id="KW-0547">Nucleotide-binding</keyword>
<keyword id="KW-0742">SOS response</keyword>
<name>RECA_CHLSY</name>
<reference key="1">
    <citation type="submission" date="2009-01" db="EMBL/GenBank/DDBJ databases">
        <title>Complete sequence of Chloroflexus sp. Y-400-fl.</title>
        <authorList>
            <consortium name="US DOE Joint Genome Institute"/>
            <person name="Lucas S."/>
            <person name="Copeland A."/>
            <person name="Lapidus A."/>
            <person name="Glavina del Rio T."/>
            <person name="Dalin E."/>
            <person name="Tice H."/>
            <person name="Bruce D."/>
            <person name="Goodwin L."/>
            <person name="Pitluck S."/>
            <person name="Sims D."/>
            <person name="Kiss H."/>
            <person name="Brettin T."/>
            <person name="Detter J.C."/>
            <person name="Han C."/>
            <person name="Larimer F."/>
            <person name="Land M."/>
            <person name="Hauser L."/>
            <person name="Kyrpides N."/>
            <person name="Ovchinnikova G."/>
            <person name="Bryant D.A."/>
            <person name="Richardson P."/>
        </authorList>
    </citation>
    <scope>NUCLEOTIDE SEQUENCE [LARGE SCALE GENOMIC DNA]</scope>
    <source>
        <strain>ATCC 29364 / DSM 637 / Y-400-fl</strain>
    </source>
</reference>
<accession>B9LCN0</accession>
<comment type="function">
    <text evidence="1">Can catalyze the hydrolysis of ATP in the presence of single-stranded DNA, the ATP-dependent uptake of single-stranded DNA by duplex DNA, and the ATP-dependent hybridization of homologous single-stranded DNAs. It interacts with LexA causing its activation and leading to its autocatalytic cleavage.</text>
</comment>
<comment type="subcellular location">
    <subcellularLocation>
        <location evidence="1">Cytoplasm</location>
    </subcellularLocation>
</comment>
<comment type="similarity">
    <text evidence="1">Belongs to the RecA family.</text>
</comment>
<organism>
    <name type="scientific">Chloroflexus aurantiacus (strain ATCC 29364 / DSM 637 / Y-400-fl)</name>
    <dbReference type="NCBI Taxonomy" id="480224"/>
    <lineage>
        <taxon>Bacteria</taxon>
        <taxon>Bacillati</taxon>
        <taxon>Chloroflexota</taxon>
        <taxon>Chloroflexia</taxon>
        <taxon>Chloroflexales</taxon>
        <taxon>Chloroflexineae</taxon>
        <taxon>Chloroflexaceae</taxon>
        <taxon>Chloroflexus</taxon>
    </lineage>
</organism>
<proteinExistence type="inferred from homology"/>
<sequence>MAITPEKEKALAATMAQIDRKFGKGSIMKMGEASSRLAIEAIPTGSIALDIALGIGGVPRGRVVEIFGPESSGKTTLAQHIIAEAQKMGGVCAFIDAEHAFDPVYAARCGVNIDDLLVSQPDTGEQALEICEMLVRSNAIDVIVIDSVAALVPRAEIEGEMGDSMPGMQARLMSQALRKLSGAISKSRTVVIFINQLRMKIGVMFGSPETTTGGQALKFYASVRLDIRRVETLKQGQEAIGSRVRVKVIKNKVAPPFRQAEFDILANEGISREGNIIDIGTELGIIRKSGAWFYLGEDRLGQGRENVREFLKNNPALTDEIERLIKAQALTNPTVIAPSVDVGDDDAIFEE</sequence>